<gene>
    <name evidence="2" type="primary">fabA</name>
    <name type="ordered locus">SPA1783</name>
</gene>
<proteinExistence type="inferred from homology"/>
<evidence type="ECO:0000250" key="1"/>
<evidence type="ECO:0000255" key="2">
    <source>
        <dbReference type="HAMAP-Rule" id="MF_00405"/>
    </source>
</evidence>
<dbReference type="EC" id="4.2.1.59" evidence="2"/>
<dbReference type="EC" id="5.3.3.14" evidence="2"/>
<dbReference type="EMBL" id="CP000026">
    <property type="protein sequence ID" value="AAV77699.1"/>
    <property type="molecule type" value="Genomic_DNA"/>
</dbReference>
<dbReference type="RefSeq" id="WP_000227928.1">
    <property type="nucleotide sequence ID" value="NC_006511.1"/>
</dbReference>
<dbReference type="SMR" id="Q5PGD2"/>
<dbReference type="KEGG" id="spt:SPA1783"/>
<dbReference type="HOGENOM" id="CLU_097925_0_0_6"/>
<dbReference type="UniPathway" id="UPA00094"/>
<dbReference type="Proteomes" id="UP000008185">
    <property type="component" value="Chromosome"/>
</dbReference>
<dbReference type="GO" id="GO:0005737">
    <property type="term" value="C:cytoplasm"/>
    <property type="evidence" value="ECO:0007669"/>
    <property type="project" value="UniProtKB-SubCell"/>
</dbReference>
<dbReference type="GO" id="GO:0019171">
    <property type="term" value="F:(3R)-hydroxyacyl-[acyl-carrier-protein] dehydratase activity"/>
    <property type="evidence" value="ECO:0007669"/>
    <property type="project" value="UniProtKB-UniRule"/>
</dbReference>
<dbReference type="GO" id="GO:0034017">
    <property type="term" value="F:trans-2-decenoyl-acyl-carrier-protein isomerase activity"/>
    <property type="evidence" value="ECO:0007669"/>
    <property type="project" value="UniProtKB-UniRule"/>
</dbReference>
<dbReference type="GO" id="GO:0006636">
    <property type="term" value="P:unsaturated fatty acid biosynthetic process"/>
    <property type="evidence" value="ECO:0007669"/>
    <property type="project" value="UniProtKB-UniRule"/>
</dbReference>
<dbReference type="CDD" id="cd01287">
    <property type="entry name" value="FabA"/>
    <property type="match status" value="1"/>
</dbReference>
<dbReference type="FunFam" id="3.10.129.10:FF:000003">
    <property type="entry name" value="3-hydroxydecanoyl-[acyl-carrier-protein] dehydratase"/>
    <property type="match status" value="1"/>
</dbReference>
<dbReference type="Gene3D" id="3.10.129.10">
    <property type="entry name" value="Hotdog Thioesterase"/>
    <property type="match status" value="1"/>
</dbReference>
<dbReference type="HAMAP" id="MF_00405">
    <property type="entry name" value="FabA"/>
    <property type="match status" value="1"/>
</dbReference>
<dbReference type="InterPro" id="IPR010083">
    <property type="entry name" value="FabA"/>
</dbReference>
<dbReference type="InterPro" id="IPR013114">
    <property type="entry name" value="FabA_FabZ"/>
</dbReference>
<dbReference type="InterPro" id="IPR029069">
    <property type="entry name" value="HotDog_dom_sf"/>
</dbReference>
<dbReference type="NCBIfam" id="TIGR01749">
    <property type="entry name" value="fabA"/>
    <property type="match status" value="1"/>
</dbReference>
<dbReference type="NCBIfam" id="NF003509">
    <property type="entry name" value="PRK05174.1"/>
    <property type="match status" value="1"/>
</dbReference>
<dbReference type="PANTHER" id="PTHR30272">
    <property type="entry name" value="3-HYDROXYACYL-[ACYL-CARRIER-PROTEIN] DEHYDRATASE"/>
    <property type="match status" value="1"/>
</dbReference>
<dbReference type="PANTHER" id="PTHR30272:SF8">
    <property type="entry name" value="3-HYDROXYDECANOYL-[ACYL-CARRIER-PROTEIN] DEHYDRATASE"/>
    <property type="match status" value="1"/>
</dbReference>
<dbReference type="Pfam" id="PF07977">
    <property type="entry name" value="FabA"/>
    <property type="match status" value="1"/>
</dbReference>
<dbReference type="SUPFAM" id="SSF54637">
    <property type="entry name" value="Thioesterase/thiol ester dehydrase-isomerase"/>
    <property type="match status" value="1"/>
</dbReference>
<sequence length="172" mass="19047">MVDKRESYTKEDLLASGRGELFGAKGPQLPAPNMLMMDRVVKMTETGGNFDKGYVEAELDINPDLWFFGCHFIGDPVMPGCLGLDAMWQLVGFYLGWLGGEGKGRALGVGEVKFTGQVLPTARKVTYRIHFKRIVNRRLIMGLADGEVLVDGRLIYTAHDLKVGLFQDTSAF</sequence>
<name>FABA_SALPA</name>
<comment type="function">
    <text evidence="2">Necessary for the introduction of cis unsaturation into fatty acids. Catalyzes the dehydration of (3R)-3-hydroxydecanoyl-ACP to E-(2)-decenoyl-ACP and then its isomerization to Z-(3)-decenoyl-ACP. Can catalyze the dehydratase reaction for beta-hydroxyacyl-ACPs with saturated chain lengths up to 16:0, being most active on intermediate chain length.</text>
</comment>
<comment type="catalytic activity">
    <reaction evidence="2">
        <text>a (3R)-hydroxyacyl-[ACP] = a (2E)-enoyl-[ACP] + H2O</text>
        <dbReference type="Rhea" id="RHEA:13097"/>
        <dbReference type="Rhea" id="RHEA-COMP:9925"/>
        <dbReference type="Rhea" id="RHEA-COMP:9945"/>
        <dbReference type="ChEBI" id="CHEBI:15377"/>
        <dbReference type="ChEBI" id="CHEBI:78784"/>
        <dbReference type="ChEBI" id="CHEBI:78827"/>
        <dbReference type="EC" id="4.2.1.59"/>
    </reaction>
</comment>
<comment type="catalytic activity">
    <reaction evidence="2">
        <text>(3R)-hydroxydecanoyl-[ACP] = (2E)-decenoyl-[ACP] + H2O</text>
        <dbReference type="Rhea" id="RHEA:41860"/>
        <dbReference type="Rhea" id="RHEA-COMP:9638"/>
        <dbReference type="Rhea" id="RHEA-COMP:9639"/>
        <dbReference type="ChEBI" id="CHEBI:15377"/>
        <dbReference type="ChEBI" id="CHEBI:78466"/>
        <dbReference type="ChEBI" id="CHEBI:78467"/>
    </reaction>
</comment>
<comment type="catalytic activity">
    <reaction evidence="2">
        <text>(2E)-decenoyl-[ACP] = (3Z)-decenoyl-[ACP]</text>
        <dbReference type="Rhea" id="RHEA:23568"/>
        <dbReference type="Rhea" id="RHEA-COMP:9639"/>
        <dbReference type="Rhea" id="RHEA-COMP:9927"/>
        <dbReference type="ChEBI" id="CHEBI:78467"/>
        <dbReference type="ChEBI" id="CHEBI:78798"/>
        <dbReference type="EC" id="5.3.3.14"/>
    </reaction>
</comment>
<comment type="pathway">
    <text evidence="2">Lipid metabolism; fatty acid biosynthesis.</text>
</comment>
<comment type="subunit">
    <text evidence="2">Homodimer.</text>
</comment>
<comment type="subcellular location">
    <subcellularLocation>
        <location evidence="2">Cytoplasm</location>
    </subcellularLocation>
</comment>
<comment type="similarity">
    <text evidence="2">Belongs to the thioester dehydratase family. FabA subfamily.</text>
</comment>
<feature type="initiator methionine" description="Removed" evidence="1">
    <location>
        <position position="1"/>
    </location>
</feature>
<feature type="chain" id="PRO_0000091612" description="3-hydroxydecanoyl-[acyl-carrier-protein] dehydratase">
    <location>
        <begin position="2"/>
        <end position="172"/>
    </location>
</feature>
<feature type="active site" evidence="2">
    <location>
        <position position="71"/>
    </location>
</feature>
<reference key="1">
    <citation type="journal article" date="2004" name="Nat. Genet.">
        <title>Comparison of genome degradation in Paratyphi A and Typhi, human-restricted serovars of Salmonella enterica that cause typhoid.</title>
        <authorList>
            <person name="McClelland M."/>
            <person name="Sanderson K.E."/>
            <person name="Clifton S.W."/>
            <person name="Latreille P."/>
            <person name="Porwollik S."/>
            <person name="Sabo A."/>
            <person name="Meyer R."/>
            <person name="Bieri T."/>
            <person name="Ozersky P."/>
            <person name="McLellan M."/>
            <person name="Harkins C.R."/>
            <person name="Wang C."/>
            <person name="Nguyen C."/>
            <person name="Berghoff A."/>
            <person name="Elliott G."/>
            <person name="Kohlberg S."/>
            <person name="Strong C."/>
            <person name="Du F."/>
            <person name="Carter J."/>
            <person name="Kremizki C."/>
            <person name="Layman D."/>
            <person name="Leonard S."/>
            <person name="Sun H."/>
            <person name="Fulton L."/>
            <person name="Nash W."/>
            <person name="Miner T."/>
            <person name="Minx P."/>
            <person name="Delehaunty K."/>
            <person name="Fronick C."/>
            <person name="Magrini V."/>
            <person name="Nhan M."/>
            <person name="Warren W."/>
            <person name="Florea L."/>
            <person name="Spieth J."/>
            <person name="Wilson R.K."/>
        </authorList>
    </citation>
    <scope>NUCLEOTIDE SEQUENCE [LARGE SCALE GENOMIC DNA]</scope>
    <source>
        <strain>ATCC 9150 / SARB42</strain>
    </source>
</reference>
<organism>
    <name type="scientific">Salmonella paratyphi A (strain ATCC 9150 / SARB42)</name>
    <dbReference type="NCBI Taxonomy" id="295319"/>
    <lineage>
        <taxon>Bacteria</taxon>
        <taxon>Pseudomonadati</taxon>
        <taxon>Pseudomonadota</taxon>
        <taxon>Gammaproteobacteria</taxon>
        <taxon>Enterobacterales</taxon>
        <taxon>Enterobacteriaceae</taxon>
        <taxon>Salmonella</taxon>
    </lineage>
</organism>
<accession>Q5PGD2</accession>
<protein>
    <recommendedName>
        <fullName evidence="2">3-hydroxydecanoyl-[acyl-carrier-protein] dehydratase</fullName>
        <ecNumber evidence="2">4.2.1.59</ecNumber>
    </recommendedName>
    <alternativeName>
        <fullName evidence="2">3-hydroxyacyl-[acyl-carrier-protein] dehydratase FabA</fullName>
    </alternativeName>
    <alternativeName>
        <fullName evidence="2">Beta-hydroxydecanoyl thioester dehydrase</fullName>
    </alternativeName>
    <alternativeName>
        <fullName evidence="2">Trans-2-decenoyl-[acyl-carrier-protein] isomerase</fullName>
        <ecNumber evidence="2">5.3.3.14</ecNumber>
    </alternativeName>
</protein>
<keyword id="KW-0963">Cytoplasm</keyword>
<keyword id="KW-0275">Fatty acid biosynthesis</keyword>
<keyword id="KW-0276">Fatty acid metabolism</keyword>
<keyword id="KW-0413">Isomerase</keyword>
<keyword id="KW-0444">Lipid biosynthesis</keyword>
<keyword id="KW-0443">Lipid metabolism</keyword>
<keyword id="KW-0456">Lyase</keyword>